<protein>
    <recommendedName>
        <fullName evidence="1">Large ribosomal subunit protein bL9</fullName>
    </recommendedName>
    <alternativeName>
        <fullName evidence="2">50S ribosomal protein L9</fullName>
    </alternativeName>
</protein>
<proteinExistence type="inferred from homology"/>
<keyword id="KW-1185">Reference proteome</keyword>
<keyword id="KW-0687">Ribonucleoprotein</keyword>
<keyword id="KW-0689">Ribosomal protein</keyword>
<keyword id="KW-0694">RNA-binding</keyword>
<keyword id="KW-0699">rRNA-binding</keyword>
<name>RL9_CHLPD</name>
<sequence length="151" mass="16299">MKVILRKDVAALGDAGEVVAVKNGYANNYLIPQGMAIRATEGTLKALETERKQQVKKVEMLRKTARELAAKIEQMTLKVFAKAGESGKLFGTVTSGDIADALKAQGIEIDRRKITLEAPVKTLGKYEADAKVFSDVAVKISFEVEAEGSEA</sequence>
<dbReference type="EMBL" id="CP000492">
    <property type="protein sequence ID" value="ABL66497.1"/>
    <property type="molecule type" value="Genomic_DNA"/>
</dbReference>
<dbReference type="RefSeq" id="WP_011746274.1">
    <property type="nucleotide sequence ID" value="NC_008639.1"/>
</dbReference>
<dbReference type="SMR" id="A1BJC0"/>
<dbReference type="STRING" id="290317.Cpha266_2509"/>
<dbReference type="KEGG" id="cph:Cpha266_2509"/>
<dbReference type="eggNOG" id="COG0359">
    <property type="taxonomic scope" value="Bacteria"/>
</dbReference>
<dbReference type="HOGENOM" id="CLU_078938_3_0_10"/>
<dbReference type="OrthoDB" id="9788336at2"/>
<dbReference type="Proteomes" id="UP000008701">
    <property type="component" value="Chromosome"/>
</dbReference>
<dbReference type="GO" id="GO:1990904">
    <property type="term" value="C:ribonucleoprotein complex"/>
    <property type="evidence" value="ECO:0007669"/>
    <property type="project" value="UniProtKB-KW"/>
</dbReference>
<dbReference type="GO" id="GO:0005840">
    <property type="term" value="C:ribosome"/>
    <property type="evidence" value="ECO:0007669"/>
    <property type="project" value="UniProtKB-KW"/>
</dbReference>
<dbReference type="GO" id="GO:0019843">
    <property type="term" value="F:rRNA binding"/>
    <property type="evidence" value="ECO:0007669"/>
    <property type="project" value="UniProtKB-UniRule"/>
</dbReference>
<dbReference type="GO" id="GO:0003735">
    <property type="term" value="F:structural constituent of ribosome"/>
    <property type="evidence" value="ECO:0007669"/>
    <property type="project" value="InterPro"/>
</dbReference>
<dbReference type="GO" id="GO:0006412">
    <property type="term" value="P:translation"/>
    <property type="evidence" value="ECO:0007669"/>
    <property type="project" value="UniProtKB-UniRule"/>
</dbReference>
<dbReference type="FunFam" id="3.40.5.10:FF:000003">
    <property type="entry name" value="50S ribosomal protein L9"/>
    <property type="match status" value="1"/>
</dbReference>
<dbReference type="Gene3D" id="3.10.430.100">
    <property type="entry name" value="Ribosomal protein L9, C-terminal domain"/>
    <property type="match status" value="1"/>
</dbReference>
<dbReference type="Gene3D" id="3.40.5.10">
    <property type="entry name" value="Ribosomal protein L9, N-terminal domain"/>
    <property type="match status" value="1"/>
</dbReference>
<dbReference type="HAMAP" id="MF_00503">
    <property type="entry name" value="Ribosomal_bL9"/>
    <property type="match status" value="1"/>
</dbReference>
<dbReference type="InterPro" id="IPR000244">
    <property type="entry name" value="Ribosomal_bL9"/>
</dbReference>
<dbReference type="InterPro" id="IPR009027">
    <property type="entry name" value="Ribosomal_bL9/RNase_H1_N"/>
</dbReference>
<dbReference type="InterPro" id="IPR020594">
    <property type="entry name" value="Ribosomal_bL9_bac/chp"/>
</dbReference>
<dbReference type="InterPro" id="IPR020069">
    <property type="entry name" value="Ribosomal_bL9_C"/>
</dbReference>
<dbReference type="InterPro" id="IPR036791">
    <property type="entry name" value="Ribosomal_bL9_C_sf"/>
</dbReference>
<dbReference type="InterPro" id="IPR020070">
    <property type="entry name" value="Ribosomal_bL9_N"/>
</dbReference>
<dbReference type="InterPro" id="IPR036935">
    <property type="entry name" value="Ribosomal_bL9_N_sf"/>
</dbReference>
<dbReference type="NCBIfam" id="TIGR00158">
    <property type="entry name" value="L9"/>
    <property type="match status" value="1"/>
</dbReference>
<dbReference type="PANTHER" id="PTHR21368">
    <property type="entry name" value="50S RIBOSOMAL PROTEIN L9"/>
    <property type="match status" value="1"/>
</dbReference>
<dbReference type="Pfam" id="PF03948">
    <property type="entry name" value="Ribosomal_L9_C"/>
    <property type="match status" value="1"/>
</dbReference>
<dbReference type="Pfam" id="PF01281">
    <property type="entry name" value="Ribosomal_L9_N"/>
    <property type="match status" value="1"/>
</dbReference>
<dbReference type="SUPFAM" id="SSF55658">
    <property type="entry name" value="L9 N-domain-like"/>
    <property type="match status" value="1"/>
</dbReference>
<dbReference type="SUPFAM" id="SSF55653">
    <property type="entry name" value="Ribosomal protein L9 C-domain"/>
    <property type="match status" value="1"/>
</dbReference>
<dbReference type="PROSITE" id="PS00651">
    <property type="entry name" value="RIBOSOMAL_L9"/>
    <property type="match status" value="1"/>
</dbReference>
<reference key="1">
    <citation type="submission" date="2006-12" db="EMBL/GenBank/DDBJ databases">
        <title>Complete sequence of Chlorobium phaeobacteroides DSM 266.</title>
        <authorList>
            <consortium name="US DOE Joint Genome Institute"/>
            <person name="Copeland A."/>
            <person name="Lucas S."/>
            <person name="Lapidus A."/>
            <person name="Barry K."/>
            <person name="Detter J.C."/>
            <person name="Glavina del Rio T."/>
            <person name="Hammon N."/>
            <person name="Israni S."/>
            <person name="Pitluck S."/>
            <person name="Goltsman E."/>
            <person name="Schmutz J."/>
            <person name="Larimer F."/>
            <person name="Land M."/>
            <person name="Hauser L."/>
            <person name="Mikhailova N."/>
            <person name="Li T."/>
            <person name="Overmann J."/>
            <person name="Bryant D.A."/>
            <person name="Richardson P."/>
        </authorList>
    </citation>
    <scope>NUCLEOTIDE SEQUENCE [LARGE SCALE GENOMIC DNA]</scope>
    <source>
        <strain>DSM 266 / SMG 266 / 2430</strain>
    </source>
</reference>
<organism>
    <name type="scientific">Chlorobium phaeobacteroides (strain DSM 266 / SMG 266 / 2430)</name>
    <dbReference type="NCBI Taxonomy" id="290317"/>
    <lineage>
        <taxon>Bacteria</taxon>
        <taxon>Pseudomonadati</taxon>
        <taxon>Chlorobiota</taxon>
        <taxon>Chlorobiia</taxon>
        <taxon>Chlorobiales</taxon>
        <taxon>Chlorobiaceae</taxon>
        <taxon>Chlorobium/Pelodictyon group</taxon>
        <taxon>Chlorobium</taxon>
    </lineage>
</organism>
<gene>
    <name evidence="1" type="primary">rplI</name>
    <name type="ordered locus">Cpha266_2509</name>
</gene>
<feature type="chain" id="PRO_1000014764" description="Large ribosomal subunit protein bL9">
    <location>
        <begin position="1"/>
        <end position="151"/>
    </location>
</feature>
<evidence type="ECO:0000255" key="1">
    <source>
        <dbReference type="HAMAP-Rule" id="MF_00503"/>
    </source>
</evidence>
<evidence type="ECO:0000305" key="2"/>
<accession>A1BJC0</accession>
<comment type="function">
    <text evidence="1">Binds to the 23S rRNA.</text>
</comment>
<comment type="similarity">
    <text evidence="1">Belongs to the bacterial ribosomal protein bL9 family.</text>
</comment>